<comment type="function">
    <text evidence="2">Pigment protein that is yellow-green in color.</text>
</comment>
<comment type="biophysicochemical properties">
    <absorption>
        <max>492 nm</max>
        <text>Exhibits a smaller absorbance peak at 480 nm. Has a strong fluorescence emission spectrum which peaks at 506 nm.</text>
    </absorption>
</comment>
<comment type="tissue specificity">
    <text evidence="2">Tentacle and oral disk.</text>
</comment>
<comment type="PTM">
    <text evidence="3">Contains a chromophore consisting of modified amino acid residues. The chromophore is formed by autocatalytic backbone condensation between Xaa-N and Gly-(N+2), and oxidation of Tyr-(N+1) to didehydrotyrosine. Maturation of the chromophore requires nothing other than molecular oxygen. The precise stereochemistry of the tyrosine has not been determined.</text>
</comment>
<comment type="biotechnology">
    <text evidence="3">Fluorescent proteins have become a useful and ubiquitous tool for making chimeric proteins, where they function as a fluorescent protein tag. Typically they tolerate N- and C-terminal fusion to a broad variety of proteins. They have been expressed in most known cell types and are used as a noninvasive fluorescent marker in living cells and organisms. They enable a wide range of applications where they have functioned as a cell lineage tracer, reporter of gene expression, or as a measure of protein-protein interactions.</text>
</comment>
<comment type="similarity">
    <text evidence="2">Belongs to the GFP family.</text>
</comment>
<dbReference type="EMBL" id="AF168422">
    <property type="protein sequence ID" value="AAF03372.1"/>
    <property type="molecule type" value="mRNA"/>
</dbReference>
<dbReference type="PDB" id="2ICR">
    <property type="method" value="X-ray"/>
    <property type="resolution" value="1.51 A"/>
    <property type="chains" value="A/B/C/D=17-231"/>
</dbReference>
<dbReference type="PDB" id="2OJK">
    <property type="method" value="X-ray"/>
    <property type="resolution" value="2.20 A"/>
    <property type="chains" value="A/B=1-231"/>
</dbReference>
<dbReference type="PDB" id="2PXS">
    <property type="method" value="X-ray"/>
    <property type="resolution" value="2.20 A"/>
    <property type="chains" value="A/B=4-231"/>
</dbReference>
<dbReference type="PDB" id="2PXW">
    <property type="method" value="X-ray"/>
    <property type="resolution" value="2.40 A"/>
    <property type="chains" value="A/B=4-231"/>
</dbReference>
<dbReference type="PDBsum" id="2ICR"/>
<dbReference type="PDBsum" id="2OJK"/>
<dbReference type="PDBsum" id="2PXS"/>
<dbReference type="PDBsum" id="2PXW"/>
<dbReference type="SMR" id="Q9U6Y5"/>
<dbReference type="EvolutionaryTrace" id="Q9U6Y5"/>
<dbReference type="GO" id="GO:0008218">
    <property type="term" value="P:bioluminescence"/>
    <property type="evidence" value="ECO:0007669"/>
    <property type="project" value="UniProtKB-KW"/>
</dbReference>
<dbReference type="Gene3D" id="2.40.155.10">
    <property type="entry name" value="Green fluorescent protein"/>
    <property type="match status" value="1"/>
</dbReference>
<dbReference type="InterPro" id="IPR009017">
    <property type="entry name" value="GFP"/>
</dbReference>
<dbReference type="InterPro" id="IPR011584">
    <property type="entry name" value="GFP-related"/>
</dbReference>
<dbReference type="Pfam" id="PF01353">
    <property type="entry name" value="GFP"/>
    <property type="match status" value="1"/>
</dbReference>
<dbReference type="SUPFAM" id="SSF54511">
    <property type="entry name" value="GFP-like"/>
    <property type="match status" value="1"/>
</dbReference>
<accession>Q9U6Y5</accession>
<sequence>MAQSKHGLTKEMTMKYRMEGCVDGHKFVITGEGIGYPFKGKQAINLCVVEGGPLPFAEDILSAAFNYGNRVFTEYPQDIVDYFKNSCPAGYTWDRSFLFEDGAVCICNADITVSVEENCMYHESKFYGVNFPADGPVMKKMTDNWEPSCEKIIPVPKQGILKGDVSMYLLLKDGGRLRCQFDTVYKAKSVPRKMPDWHFIQHKLTREDRSDAKNQKWHLTEHAIASGSALP</sequence>
<evidence type="ECO:0000250" key="1">
    <source>
        <dbReference type="UniProtKB" id="Q9U6Y8"/>
    </source>
</evidence>
<evidence type="ECO:0000269" key="2">
    <source>
    </source>
</evidence>
<evidence type="ECO:0000305" key="3"/>
<evidence type="ECO:0000312" key="4">
    <source>
        <dbReference type="EMBL" id="AAF03372.1"/>
    </source>
</evidence>
<evidence type="ECO:0007829" key="5">
    <source>
        <dbReference type="PDB" id="2ICR"/>
    </source>
</evidence>
<evidence type="ECO:0007829" key="6">
    <source>
        <dbReference type="PDB" id="2OJK"/>
    </source>
</evidence>
<reference evidence="3 4" key="1">
    <citation type="journal article" date="1999" name="Nat. Biotechnol.">
        <title>Fluorescent proteins from nonbioluminescent Anthozoa species.</title>
        <authorList>
            <person name="Matz M.V."/>
            <person name="Fradkov A.F."/>
            <person name="Labas Y.A."/>
            <person name="Savitsky A.P."/>
            <person name="Zaraisky A.G."/>
            <person name="Markelov M.L."/>
            <person name="Lukyanov S.A."/>
        </authorList>
    </citation>
    <scope>NUCLEOTIDE SEQUENCE [MRNA]</scope>
    <scope>FUNCTION</scope>
    <scope>TISSUE SPECIFICITY</scope>
</reference>
<organism>
    <name type="scientific">Zoanthus sp.</name>
    <name type="common">Green polyp</name>
    <dbReference type="NCBI Taxonomy" id="105402"/>
    <lineage>
        <taxon>Eukaryota</taxon>
        <taxon>Metazoa</taxon>
        <taxon>Cnidaria</taxon>
        <taxon>Anthozoa</taxon>
        <taxon>Hexacorallia</taxon>
        <taxon>Zoantharia</taxon>
        <taxon>Zoanthidae</taxon>
        <taxon>Zoanthus</taxon>
    </lineage>
</organism>
<name>GFPL1_ZOASP</name>
<keyword id="KW-0002">3D-structure</keyword>
<keyword id="KW-0157">Chromophore</keyword>
<keyword id="KW-0455">Luminescence</keyword>
<keyword id="KW-0599">Photoprotein</keyword>
<feature type="chain" id="PRO_0000192582" description="GFP-like fluorescent chromoprotein FP506">
    <location>
        <begin position="1"/>
        <end position="231"/>
    </location>
</feature>
<feature type="modified residue" description="2,3-didehydrotyrosine" evidence="1">
    <location>
        <position position="67"/>
    </location>
</feature>
<feature type="cross-link" description="5-imidazolinone (Asn-Gly)" evidence="1">
    <location>
        <begin position="66"/>
        <end position="68"/>
    </location>
</feature>
<feature type="strand" evidence="5">
    <location>
        <begin position="10"/>
        <end position="22"/>
    </location>
</feature>
<feature type="strand" evidence="5">
    <location>
        <begin position="25"/>
        <end position="36"/>
    </location>
</feature>
<feature type="helix" evidence="5">
    <location>
        <begin position="37"/>
        <end position="39"/>
    </location>
</feature>
<feature type="strand" evidence="5">
    <location>
        <begin position="41"/>
        <end position="51"/>
    </location>
</feature>
<feature type="helix" evidence="5">
    <location>
        <begin position="58"/>
        <end position="64"/>
    </location>
</feature>
<feature type="strand" evidence="6">
    <location>
        <begin position="72"/>
        <end position="74"/>
    </location>
</feature>
<feature type="helix" evidence="5">
    <location>
        <begin position="82"/>
        <end position="85"/>
    </location>
</feature>
<feature type="turn" evidence="5">
    <location>
        <begin position="86"/>
        <end position="89"/>
    </location>
</feature>
<feature type="strand" evidence="5">
    <location>
        <begin position="91"/>
        <end position="99"/>
    </location>
</feature>
<feature type="strand" evidence="5">
    <location>
        <begin position="104"/>
        <end position="114"/>
    </location>
</feature>
<feature type="turn" evidence="5">
    <location>
        <begin position="115"/>
        <end position="118"/>
    </location>
</feature>
<feature type="strand" evidence="5">
    <location>
        <begin position="119"/>
        <end position="129"/>
    </location>
</feature>
<feature type="turn" evidence="5">
    <location>
        <begin position="136"/>
        <end position="140"/>
    </location>
</feature>
<feature type="strand" evidence="5">
    <location>
        <begin position="142"/>
        <end position="145"/>
    </location>
</feature>
<feature type="strand" evidence="5">
    <location>
        <begin position="148"/>
        <end position="155"/>
    </location>
</feature>
<feature type="turn" evidence="5">
    <location>
        <begin position="156"/>
        <end position="159"/>
    </location>
</feature>
<feature type="strand" evidence="5">
    <location>
        <begin position="160"/>
        <end position="171"/>
    </location>
</feature>
<feature type="strand" evidence="5">
    <location>
        <begin position="176"/>
        <end position="189"/>
    </location>
</feature>
<feature type="strand" evidence="5">
    <location>
        <begin position="198"/>
        <end position="208"/>
    </location>
</feature>
<feature type="strand" evidence="5">
    <location>
        <begin position="216"/>
        <end position="226"/>
    </location>
</feature>
<protein>
    <recommendedName>
        <fullName>GFP-like fluorescent chromoprotein FP506</fullName>
    </recommendedName>
    <alternativeName>
        <fullName>zFP506</fullName>
    </alternativeName>
</protein>
<proteinExistence type="evidence at protein level"/>